<sequence length="174" mass="18949">MNRTEKEQVISELHEKMAKAKAAIVAEPKGLNVAVVTDLRKKLRDAKIDYRIVKNTLAARAAKGTPVEPVADRFVGPTALVMSYDDVVTPAKLLADFMKDRENFVIRTAIIEGKVIDAKGVQALAKMPGLKELRGQIAAMIAQPATKLARLVGTPGQQLARVVGARREQLEKQA</sequence>
<accession>B8JB72</accession>
<evidence type="ECO:0000255" key="1">
    <source>
        <dbReference type="HAMAP-Rule" id="MF_00362"/>
    </source>
</evidence>
<evidence type="ECO:0000305" key="2"/>
<dbReference type="EMBL" id="CP001359">
    <property type="protein sequence ID" value="ACL65699.1"/>
    <property type="molecule type" value="Genomic_DNA"/>
</dbReference>
<dbReference type="RefSeq" id="WP_012633519.1">
    <property type="nucleotide sequence ID" value="NC_011891.1"/>
</dbReference>
<dbReference type="SMR" id="B8JB72"/>
<dbReference type="KEGG" id="acp:A2cp1_2361"/>
<dbReference type="HOGENOM" id="CLU_092227_0_0_7"/>
<dbReference type="Proteomes" id="UP000007089">
    <property type="component" value="Chromosome"/>
</dbReference>
<dbReference type="GO" id="GO:1990904">
    <property type="term" value="C:ribonucleoprotein complex"/>
    <property type="evidence" value="ECO:0007669"/>
    <property type="project" value="UniProtKB-KW"/>
</dbReference>
<dbReference type="GO" id="GO:0005840">
    <property type="term" value="C:ribosome"/>
    <property type="evidence" value="ECO:0007669"/>
    <property type="project" value="UniProtKB-KW"/>
</dbReference>
<dbReference type="GO" id="GO:0070180">
    <property type="term" value="F:large ribosomal subunit rRNA binding"/>
    <property type="evidence" value="ECO:0007669"/>
    <property type="project" value="UniProtKB-UniRule"/>
</dbReference>
<dbReference type="GO" id="GO:0006412">
    <property type="term" value="P:translation"/>
    <property type="evidence" value="ECO:0007669"/>
    <property type="project" value="UniProtKB-UniRule"/>
</dbReference>
<dbReference type="CDD" id="cd05797">
    <property type="entry name" value="Ribosomal_L10"/>
    <property type="match status" value="1"/>
</dbReference>
<dbReference type="Gene3D" id="3.30.70.1730">
    <property type="match status" value="1"/>
</dbReference>
<dbReference type="HAMAP" id="MF_00362">
    <property type="entry name" value="Ribosomal_uL10"/>
    <property type="match status" value="1"/>
</dbReference>
<dbReference type="InterPro" id="IPR001790">
    <property type="entry name" value="Ribosomal_uL10"/>
</dbReference>
<dbReference type="InterPro" id="IPR043141">
    <property type="entry name" value="Ribosomal_uL10-like_sf"/>
</dbReference>
<dbReference type="InterPro" id="IPR022973">
    <property type="entry name" value="Ribosomal_uL10_bac"/>
</dbReference>
<dbReference type="InterPro" id="IPR047865">
    <property type="entry name" value="Ribosomal_uL10_bac_type"/>
</dbReference>
<dbReference type="NCBIfam" id="NF000955">
    <property type="entry name" value="PRK00099.1-1"/>
    <property type="match status" value="1"/>
</dbReference>
<dbReference type="PANTHER" id="PTHR11560">
    <property type="entry name" value="39S RIBOSOMAL PROTEIN L10, MITOCHONDRIAL"/>
    <property type="match status" value="1"/>
</dbReference>
<dbReference type="Pfam" id="PF00466">
    <property type="entry name" value="Ribosomal_L10"/>
    <property type="match status" value="1"/>
</dbReference>
<dbReference type="SUPFAM" id="SSF160369">
    <property type="entry name" value="Ribosomal protein L10-like"/>
    <property type="match status" value="1"/>
</dbReference>
<comment type="function">
    <text evidence="1">Forms part of the ribosomal stalk, playing a central role in the interaction of the ribosome with GTP-bound translation factors.</text>
</comment>
<comment type="subunit">
    <text evidence="1">Part of the ribosomal stalk of the 50S ribosomal subunit. The N-terminus interacts with L11 and the large rRNA to form the base of the stalk. The C-terminus forms an elongated spine to which L12 dimers bind in a sequential fashion forming a multimeric L10(L12)X complex.</text>
</comment>
<comment type="similarity">
    <text evidence="1">Belongs to the universal ribosomal protein uL10 family.</text>
</comment>
<organism>
    <name type="scientific">Anaeromyxobacter dehalogenans (strain 2CP-1 / ATCC BAA-258)</name>
    <dbReference type="NCBI Taxonomy" id="455488"/>
    <lineage>
        <taxon>Bacteria</taxon>
        <taxon>Pseudomonadati</taxon>
        <taxon>Myxococcota</taxon>
        <taxon>Myxococcia</taxon>
        <taxon>Myxococcales</taxon>
        <taxon>Cystobacterineae</taxon>
        <taxon>Anaeromyxobacteraceae</taxon>
        <taxon>Anaeromyxobacter</taxon>
    </lineage>
</organism>
<proteinExistence type="inferred from homology"/>
<feature type="chain" id="PRO_1000195522" description="Large ribosomal subunit protein uL10">
    <location>
        <begin position="1"/>
        <end position="174"/>
    </location>
</feature>
<reference key="1">
    <citation type="submission" date="2009-01" db="EMBL/GenBank/DDBJ databases">
        <title>Complete sequence of Anaeromyxobacter dehalogenans 2CP-1.</title>
        <authorList>
            <person name="Lucas S."/>
            <person name="Copeland A."/>
            <person name="Lapidus A."/>
            <person name="Glavina del Rio T."/>
            <person name="Dalin E."/>
            <person name="Tice H."/>
            <person name="Bruce D."/>
            <person name="Goodwin L."/>
            <person name="Pitluck S."/>
            <person name="Saunders E."/>
            <person name="Brettin T."/>
            <person name="Detter J.C."/>
            <person name="Han C."/>
            <person name="Larimer F."/>
            <person name="Land M."/>
            <person name="Hauser L."/>
            <person name="Kyrpides N."/>
            <person name="Ovchinnikova G."/>
            <person name="Beliaev A.S."/>
            <person name="Richardson P."/>
        </authorList>
    </citation>
    <scope>NUCLEOTIDE SEQUENCE [LARGE SCALE GENOMIC DNA]</scope>
    <source>
        <strain>2CP-1 / ATCC BAA-258</strain>
    </source>
</reference>
<gene>
    <name evidence="1" type="primary">rplJ</name>
    <name type="ordered locus">A2cp1_2361</name>
</gene>
<keyword id="KW-0687">Ribonucleoprotein</keyword>
<keyword id="KW-0689">Ribosomal protein</keyword>
<keyword id="KW-0694">RNA-binding</keyword>
<keyword id="KW-0699">rRNA-binding</keyword>
<name>RL10_ANAD2</name>
<protein>
    <recommendedName>
        <fullName evidence="1">Large ribosomal subunit protein uL10</fullName>
    </recommendedName>
    <alternativeName>
        <fullName evidence="2">50S ribosomal protein L10</fullName>
    </alternativeName>
</protein>